<proteinExistence type="inferred from homology"/>
<gene>
    <name evidence="1" type="primary">thrB</name>
    <name type="ordered locus">BH04420</name>
</gene>
<comment type="catalytic activity">
    <reaction evidence="1">
        <text>L-homoserine + ATP = O-phospho-L-homoserine + ADP + H(+)</text>
        <dbReference type="Rhea" id="RHEA:13985"/>
        <dbReference type="ChEBI" id="CHEBI:15378"/>
        <dbReference type="ChEBI" id="CHEBI:30616"/>
        <dbReference type="ChEBI" id="CHEBI:57476"/>
        <dbReference type="ChEBI" id="CHEBI:57590"/>
        <dbReference type="ChEBI" id="CHEBI:456216"/>
        <dbReference type="EC" id="2.7.1.39"/>
    </reaction>
</comment>
<comment type="pathway">
    <text evidence="1">Amino-acid biosynthesis; L-threonine biosynthesis; L-threonine from L-aspartate: step 4/5.</text>
</comment>
<comment type="similarity">
    <text evidence="1">Belongs to the pseudomonas-type ThrB family.</text>
</comment>
<organism>
    <name type="scientific">Bartonella henselae (strain ATCC 49882 / DSM 28221 / CCUG 30454 / Houston 1)</name>
    <name type="common">Rochalimaea henselae</name>
    <dbReference type="NCBI Taxonomy" id="283166"/>
    <lineage>
        <taxon>Bacteria</taxon>
        <taxon>Pseudomonadati</taxon>
        <taxon>Pseudomonadota</taxon>
        <taxon>Alphaproteobacteria</taxon>
        <taxon>Hyphomicrobiales</taxon>
        <taxon>Bartonellaceae</taxon>
        <taxon>Bartonella</taxon>
    </lineage>
</organism>
<accession>Q6G4C4</accession>
<reference key="1">
    <citation type="journal article" date="2004" name="Proc. Natl. Acad. Sci. U.S.A.">
        <title>The louse-borne human pathogen Bartonella quintana is a genomic derivative of the zoonotic agent Bartonella henselae.</title>
        <authorList>
            <person name="Alsmark U.C.M."/>
            <person name="Frank A.C."/>
            <person name="Karlberg E.O."/>
            <person name="Legault B.-A."/>
            <person name="Ardell D.H."/>
            <person name="Canbaeck B."/>
            <person name="Eriksson A.-S."/>
            <person name="Naeslund A.K."/>
            <person name="Handley S.A."/>
            <person name="Huvet M."/>
            <person name="La Scola B."/>
            <person name="Holmberg M."/>
            <person name="Andersson S.G.E."/>
        </authorList>
    </citation>
    <scope>NUCLEOTIDE SEQUENCE [LARGE SCALE GENOMIC DNA]</scope>
    <source>
        <strain>ATCC 49882 / DSM 28221 / CCUG 30454 / Houston 1</strain>
    </source>
</reference>
<name>KHSE_BARHE</name>
<sequence length="319" mass="36728">MAVHTDIHPNDLKAFLTRYSIGSLLSYQGIVEGIENSNFMLYTTEGKFILTLYEQRISKDDLPFFCNLMQHLGRRGVPCPQPVIQNNGMMIGELAGRPAAIITFLEGEWVRQSNIYHCCEVGCSLAQLHLAAQDFSLSRRNTLSLVDWKCLWKRCQVRKDPLLREFGKKIDTELAFLEENWPSILPTGIIHADLFNDNVFFLNDRLSGIIDFYFACNDFWAYDLAICLNAWCFEHDHSYNLIKARGLLESYQKIRPLVPLELNAIVLLARGAALRFLLTRLYDWFNTPPGSVVVKKDPWEYWHKLCFFSNVGSLSELGF</sequence>
<keyword id="KW-0028">Amino-acid biosynthesis</keyword>
<keyword id="KW-0067">ATP-binding</keyword>
<keyword id="KW-0418">Kinase</keyword>
<keyword id="KW-0547">Nucleotide-binding</keyword>
<keyword id="KW-0791">Threonine biosynthesis</keyword>
<keyword id="KW-0808">Transferase</keyword>
<protein>
    <recommendedName>
        <fullName evidence="1">Homoserine kinase</fullName>
        <shortName evidence="1">HK</shortName>
        <shortName evidence="1">HSK</shortName>
        <ecNumber evidence="1">2.7.1.39</ecNumber>
    </recommendedName>
</protein>
<dbReference type="EC" id="2.7.1.39" evidence="1"/>
<dbReference type="EMBL" id="BX897699">
    <property type="protein sequence ID" value="CAF27251.1"/>
    <property type="molecule type" value="Genomic_DNA"/>
</dbReference>
<dbReference type="RefSeq" id="WP_011180375.1">
    <property type="nucleotide sequence ID" value="NZ_LRIJ02000001.1"/>
</dbReference>
<dbReference type="SMR" id="Q6G4C4"/>
<dbReference type="PaxDb" id="283166-BH04420"/>
<dbReference type="EnsemblBacteria" id="CAF27251">
    <property type="protein sequence ID" value="CAF27251"/>
    <property type="gene ID" value="BH04420"/>
</dbReference>
<dbReference type="KEGG" id="bhe:BH04420"/>
<dbReference type="eggNOG" id="COG2334">
    <property type="taxonomic scope" value="Bacteria"/>
</dbReference>
<dbReference type="OrthoDB" id="9777460at2"/>
<dbReference type="UniPathway" id="UPA00050">
    <property type="reaction ID" value="UER00064"/>
</dbReference>
<dbReference type="Proteomes" id="UP000000421">
    <property type="component" value="Chromosome"/>
</dbReference>
<dbReference type="GO" id="GO:0005524">
    <property type="term" value="F:ATP binding"/>
    <property type="evidence" value="ECO:0007669"/>
    <property type="project" value="UniProtKB-KW"/>
</dbReference>
<dbReference type="GO" id="GO:0004413">
    <property type="term" value="F:homoserine kinase activity"/>
    <property type="evidence" value="ECO:0007669"/>
    <property type="project" value="UniProtKB-UniRule"/>
</dbReference>
<dbReference type="GO" id="GO:0009088">
    <property type="term" value="P:threonine biosynthetic process"/>
    <property type="evidence" value="ECO:0007669"/>
    <property type="project" value="UniProtKB-UniRule"/>
</dbReference>
<dbReference type="CDD" id="cd05153">
    <property type="entry name" value="HomoserineK_II"/>
    <property type="match status" value="1"/>
</dbReference>
<dbReference type="Gene3D" id="3.90.1200.10">
    <property type="match status" value="1"/>
</dbReference>
<dbReference type="Gene3D" id="3.30.200.20">
    <property type="entry name" value="Phosphorylase Kinase, domain 1"/>
    <property type="match status" value="1"/>
</dbReference>
<dbReference type="HAMAP" id="MF_00301">
    <property type="entry name" value="Homoser_kinase_2"/>
    <property type="match status" value="1"/>
</dbReference>
<dbReference type="InterPro" id="IPR002575">
    <property type="entry name" value="Aminoglycoside_PTrfase"/>
</dbReference>
<dbReference type="InterPro" id="IPR005280">
    <property type="entry name" value="Homoserine_kinase_II"/>
</dbReference>
<dbReference type="InterPro" id="IPR011009">
    <property type="entry name" value="Kinase-like_dom_sf"/>
</dbReference>
<dbReference type="InterPro" id="IPR050249">
    <property type="entry name" value="Pseudomonas-type_ThrB"/>
</dbReference>
<dbReference type="NCBIfam" id="NF003558">
    <property type="entry name" value="PRK05231.1"/>
    <property type="match status" value="1"/>
</dbReference>
<dbReference type="NCBIfam" id="TIGR00938">
    <property type="entry name" value="thrB_alt"/>
    <property type="match status" value="1"/>
</dbReference>
<dbReference type="PANTHER" id="PTHR21064:SF6">
    <property type="entry name" value="AMINOGLYCOSIDE PHOSPHOTRANSFERASE DOMAIN-CONTAINING PROTEIN"/>
    <property type="match status" value="1"/>
</dbReference>
<dbReference type="PANTHER" id="PTHR21064">
    <property type="entry name" value="AMINOGLYCOSIDE PHOSPHOTRANSFERASE DOMAIN-CONTAINING PROTEIN-RELATED"/>
    <property type="match status" value="1"/>
</dbReference>
<dbReference type="Pfam" id="PF01636">
    <property type="entry name" value="APH"/>
    <property type="match status" value="1"/>
</dbReference>
<dbReference type="SUPFAM" id="SSF56112">
    <property type="entry name" value="Protein kinase-like (PK-like)"/>
    <property type="match status" value="1"/>
</dbReference>
<feature type="chain" id="PRO_1000022575" description="Homoserine kinase">
    <location>
        <begin position="1"/>
        <end position="319"/>
    </location>
</feature>
<evidence type="ECO:0000255" key="1">
    <source>
        <dbReference type="HAMAP-Rule" id="MF_00301"/>
    </source>
</evidence>